<feature type="chain" id="PRO_0000153667" description="Probable prefoldin subunit 5">
    <location>
        <begin position="1"/>
        <end position="154"/>
    </location>
</feature>
<proteinExistence type="evidence at protein level"/>
<evidence type="ECO:0000250" key="1"/>
<evidence type="ECO:0000269" key="2">
    <source>
    </source>
</evidence>
<evidence type="ECO:0000305" key="3"/>
<reference key="1">
    <citation type="journal article" date="2001" name="Differentiation">
        <title>Bob1, a Gim5/MM-1/Pfd5 homolog, interacts with the MAP kinase kinase byr1 to regulate sexual differentiation in the fission yeast, Schizosaccharomyces pombe.</title>
        <authorList>
            <person name="Henkel J."/>
            <person name="Du H."/>
            <person name="Yang P."/>
            <person name="Qyang Y."/>
            <person name="Kansra S."/>
            <person name="Ko M."/>
            <person name="Kim H."/>
            <person name="Marcus S."/>
        </authorList>
    </citation>
    <scope>NUCLEOTIDE SEQUENCE [GENOMIC DNA]</scope>
    <scope>FUNCTION</scope>
    <scope>INTERACTION WITH BYR1</scope>
    <scope>SUBCELLULAR LOCATION</scope>
</reference>
<reference key="2">
    <citation type="journal article" date="2002" name="Nature">
        <title>The genome sequence of Schizosaccharomyces pombe.</title>
        <authorList>
            <person name="Wood V."/>
            <person name="Gwilliam R."/>
            <person name="Rajandream M.A."/>
            <person name="Lyne M.H."/>
            <person name="Lyne R."/>
            <person name="Stewart A."/>
            <person name="Sgouros J.G."/>
            <person name="Peat N."/>
            <person name="Hayles J."/>
            <person name="Baker S.G."/>
            <person name="Basham D."/>
            <person name="Bowman S."/>
            <person name="Brooks K."/>
            <person name="Brown D."/>
            <person name="Brown S."/>
            <person name="Chillingworth T."/>
            <person name="Churcher C.M."/>
            <person name="Collins M."/>
            <person name="Connor R."/>
            <person name="Cronin A."/>
            <person name="Davis P."/>
            <person name="Feltwell T."/>
            <person name="Fraser A."/>
            <person name="Gentles S."/>
            <person name="Goble A."/>
            <person name="Hamlin N."/>
            <person name="Harris D.E."/>
            <person name="Hidalgo J."/>
            <person name="Hodgson G."/>
            <person name="Holroyd S."/>
            <person name="Hornsby T."/>
            <person name="Howarth S."/>
            <person name="Huckle E.J."/>
            <person name="Hunt S."/>
            <person name="Jagels K."/>
            <person name="James K.D."/>
            <person name="Jones L."/>
            <person name="Jones M."/>
            <person name="Leather S."/>
            <person name="McDonald S."/>
            <person name="McLean J."/>
            <person name="Mooney P."/>
            <person name="Moule S."/>
            <person name="Mungall K.L."/>
            <person name="Murphy L.D."/>
            <person name="Niblett D."/>
            <person name="Odell C."/>
            <person name="Oliver K."/>
            <person name="O'Neil S."/>
            <person name="Pearson D."/>
            <person name="Quail M.A."/>
            <person name="Rabbinowitsch E."/>
            <person name="Rutherford K.M."/>
            <person name="Rutter S."/>
            <person name="Saunders D."/>
            <person name="Seeger K."/>
            <person name="Sharp S."/>
            <person name="Skelton J."/>
            <person name="Simmonds M.N."/>
            <person name="Squares R."/>
            <person name="Squares S."/>
            <person name="Stevens K."/>
            <person name="Taylor K."/>
            <person name="Taylor R.G."/>
            <person name="Tivey A."/>
            <person name="Walsh S.V."/>
            <person name="Warren T."/>
            <person name="Whitehead S."/>
            <person name="Woodward J.R."/>
            <person name="Volckaert G."/>
            <person name="Aert R."/>
            <person name="Robben J."/>
            <person name="Grymonprez B."/>
            <person name="Weltjens I."/>
            <person name="Vanstreels E."/>
            <person name="Rieger M."/>
            <person name="Schaefer M."/>
            <person name="Mueller-Auer S."/>
            <person name="Gabel C."/>
            <person name="Fuchs M."/>
            <person name="Duesterhoeft A."/>
            <person name="Fritzc C."/>
            <person name="Holzer E."/>
            <person name="Moestl D."/>
            <person name="Hilbert H."/>
            <person name="Borzym K."/>
            <person name="Langer I."/>
            <person name="Beck A."/>
            <person name="Lehrach H."/>
            <person name="Reinhardt R."/>
            <person name="Pohl T.M."/>
            <person name="Eger P."/>
            <person name="Zimmermann W."/>
            <person name="Wedler H."/>
            <person name="Wambutt R."/>
            <person name="Purnelle B."/>
            <person name="Goffeau A."/>
            <person name="Cadieu E."/>
            <person name="Dreano S."/>
            <person name="Gloux S."/>
            <person name="Lelaure V."/>
            <person name="Mottier S."/>
            <person name="Galibert F."/>
            <person name="Aves S.J."/>
            <person name="Xiang Z."/>
            <person name="Hunt C."/>
            <person name="Moore K."/>
            <person name="Hurst S.M."/>
            <person name="Lucas M."/>
            <person name="Rochet M."/>
            <person name="Gaillardin C."/>
            <person name="Tallada V.A."/>
            <person name="Garzon A."/>
            <person name="Thode G."/>
            <person name="Daga R.R."/>
            <person name="Cruzado L."/>
            <person name="Jimenez J."/>
            <person name="Sanchez M."/>
            <person name="del Rey F."/>
            <person name="Benito J."/>
            <person name="Dominguez A."/>
            <person name="Revuelta J.L."/>
            <person name="Moreno S."/>
            <person name="Armstrong J."/>
            <person name="Forsburg S.L."/>
            <person name="Cerutti L."/>
            <person name="Lowe T."/>
            <person name="McCombie W.R."/>
            <person name="Paulsen I."/>
            <person name="Potashkin J."/>
            <person name="Shpakovski G.V."/>
            <person name="Ussery D."/>
            <person name="Barrell B.G."/>
            <person name="Nurse P."/>
        </authorList>
    </citation>
    <scope>NUCLEOTIDE SEQUENCE [LARGE SCALE GENOMIC DNA]</scope>
    <source>
        <strain>972 / ATCC 24843</strain>
    </source>
</reference>
<accession>O94307</accession>
<keyword id="KW-0143">Chaperone</keyword>
<keyword id="KW-0963">Cytoplasm</keyword>
<keyword id="KW-1185">Reference proteome</keyword>
<organism>
    <name type="scientific">Schizosaccharomyces pombe (strain 972 / ATCC 24843)</name>
    <name type="common">Fission yeast</name>
    <dbReference type="NCBI Taxonomy" id="284812"/>
    <lineage>
        <taxon>Eukaryota</taxon>
        <taxon>Fungi</taxon>
        <taxon>Dikarya</taxon>
        <taxon>Ascomycota</taxon>
        <taxon>Taphrinomycotina</taxon>
        <taxon>Schizosaccharomycetes</taxon>
        <taxon>Schizosaccharomycetales</taxon>
        <taxon>Schizosaccharomycetaceae</taxon>
        <taxon>Schizosaccharomyces</taxon>
    </lineage>
</organism>
<dbReference type="EMBL" id="CU329671">
    <property type="protein sequence ID" value="CAA22116.1"/>
    <property type="molecule type" value="Genomic_DNA"/>
</dbReference>
<dbReference type="EMBL" id="AY035821">
    <property type="protein sequence ID" value="AAK60340.1"/>
    <property type="molecule type" value="Genomic_DNA"/>
</dbReference>
<dbReference type="PIR" id="T39892">
    <property type="entry name" value="T39892"/>
</dbReference>
<dbReference type="RefSeq" id="NP_596679.1">
    <property type="nucleotide sequence ID" value="NM_001022602.2"/>
</dbReference>
<dbReference type="SMR" id="O94307"/>
<dbReference type="BioGRID" id="277189">
    <property type="interactions" value="133"/>
</dbReference>
<dbReference type="FunCoup" id="O94307">
    <property type="interactions" value="707"/>
</dbReference>
<dbReference type="IntAct" id="O94307">
    <property type="interactions" value="1"/>
</dbReference>
<dbReference type="STRING" id="284812.O94307"/>
<dbReference type="iPTMnet" id="O94307"/>
<dbReference type="PaxDb" id="4896-SPBC215.02.1"/>
<dbReference type="EnsemblFungi" id="SPBC215.02.1">
    <property type="protein sequence ID" value="SPBC215.02.1:pep"/>
    <property type="gene ID" value="SPBC215.02"/>
</dbReference>
<dbReference type="GeneID" id="2540664"/>
<dbReference type="KEGG" id="spo:2540664"/>
<dbReference type="PomBase" id="SPBC215.02">
    <property type="gene designation" value="bob1"/>
</dbReference>
<dbReference type="VEuPathDB" id="FungiDB:SPBC215.02"/>
<dbReference type="eggNOG" id="KOG3048">
    <property type="taxonomic scope" value="Eukaryota"/>
</dbReference>
<dbReference type="HOGENOM" id="CLU_091867_0_1_1"/>
<dbReference type="InParanoid" id="O94307"/>
<dbReference type="OMA" id="QAKFKAC"/>
<dbReference type="PhylomeDB" id="O94307"/>
<dbReference type="PRO" id="PR:O94307"/>
<dbReference type="Proteomes" id="UP000002485">
    <property type="component" value="Chromosome II"/>
</dbReference>
<dbReference type="GO" id="GO:0032153">
    <property type="term" value="C:cell division site"/>
    <property type="evidence" value="ECO:0000314"/>
    <property type="project" value="PomBase"/>
</dbReference>
<dbReference type="GO" id="GO:0051286">
    <property type="term" value="C:cell tip"/>
    <property type="evidence" value="ECO:0000314"/>
    <property type="project" value="PomBase"/>
</dbReference>
<dbReference type="GO" id="GO:0005737">
    <property type="term" value="C:cytoplasm"/>
    <property type="evidence" value="ECO:0000318"/>
    <property type="project" value="GO_Central"/>
</dbReference>
<dbReference type="GO" id="GO:0005829">
    <property type="term" value="C:cytosol"/>
    <property type="evidence" value="ECO:0007005"/>
    <property type="project" value="PomBase"/>
</dbReference>
<dbReference type="GO" id="GO:0005634">
    <property type="term" value="C:nucleus"/>
    <property type="evidence" value="ECO:0007005"/>
    <property type="project" value="PomBase"/>
</dbReference>
<dbReference type="GO" id="GO:0016272">
    <property type="term" value="C:prefoldin complex"/>
    <property type="evidence" value="ECO:0000318"/>
    <property type="project" value="GO_Central"/>
</dbReference>
<dbReference type="GO" id="GO:0051082">
    <property type="term" value="F:unfolded protein binding"/>
    <property type="evidence" value="ECO:0007669"/>
    <property type="project" value="InterPro"/>
</dbReference>
<dbReference type="GO" id="GO:0006457">
    <property type="term" value="P:protein folding"/>
    <property type="evidence" value="ECO:0000305"/>
    <property type="project" value="PomBase"/>
</dbReference>
<dbReference type="GO" id="GO:1990113">
    <property type="term" value="P:RNA polymerase I assembly"/>
    <property type="evidence" value="ECO:0000318"/>
    <property type="project" value="GO_Central"/>
</dbReference>
<dbReference type="GO" id="GO:1990114">
    <property type="term" value="P:RNA polymerase II core complex assembly"/>
    <property type="evidence" value="ECO:0000318"/>
    <property type="project" value="GO_Central"/>
</dbReference>
<dbReference type="GO" id="GO:1990115">
    <property type="term" value="P:RNA polymerase III assembly"/>
    <property type="evidence" value="ECO:0000318"/>
    <property type="project" value="GO_Central"/>
</dbReference>
<dbReference type="CDD" id="cd23157">
    <property type="entry name" value="Prefoldin_5"/>
    <property type="match status" value="1"/>
</dbReference>
<dbReference type="FunFam" id="1.10.287.370:FF:000004">
    <property type="entry name" value="Probable prefoldin subunit 5"/>
    <property type="match status" value="1"/>
</dbReference>
<dbReference type="Gene3D" id="1.10.287.370">
    <property type="match status" value="1"/>
</dbReference>
<dbReference type="InterPro" id="IPR011599">
    <property type="entry name" value="PFD_alpha_archaea"/>
</dbReference>
<dbReference type="InterPro" id="IPR009053">
    <property type="entry name" value="Prefoldin"/>
</dbReference>
<dbReference type="InterPro" id="IPR004127">
    <property type="entry name" value="Prefoldin_subunit_alpha"/>
</dbReference>
<dbReference type="NCBIfam" id="TIGR00293">
    <property type="entry name" value="prefoldin subunit alpha"/>
    <property type="match status" value="1"/>
</dbReference>
<dbReference type="PANTHER" id="PTHR12674">
    <property type="entry name" value="PREFOLDIN SUBUNIT 5"/>
    <property type="match status" value="1"/>
</dbReference>
<dbReference type="PANTHER" id="PTHR12674:SF2">
    <property type="entry name" value="PREFOLDIN SUBUNIT 5"/>
    <property type="match status" value="1"/>
</dbReference>
<dbReference type="Pfam" id="PF02996">
    <property type="entry name" value="Prefoldin"/>
    <property type="match status" value="1"/>
</dbReference>
<dbReference type="SUPFAM" id="SSF46579">
    <property type="entry name" value="Prefoldin"/>
    <property type="match status" value="1"/>
</dbReference>
<protein>
    <recommendedName>
        <fullName>Probable prefoldin subunit 5</fullName>
    </recommendedName>
    <alternativeName>
        <fullName>Byr1-binding protein Bob1</fullName>
    </alternativeName>
</protein>
<comment type="function">
    <text evidence="1 2">Binds specifically to cytosolic chaperonin (c-CPN) and transfers target proteins to it. Binds to nascent polypeptide chain and promotes folding in an environment in which there are many competing pathways for nonnative proteins (By similarity). Required for normal cytoskeletal function and when bound to byr1, is involved in the regulation of sexual differentiation.</text>
</comment>
<comment type="subunit">
    <text evidence="1 2">Heterohexamer of two PFD-alpha type and four PFD-beta type subunits (By similarity). Interacts with byr1.</text>
</comment>
<comment type="interaction">
    <interactant intactId="EBI-2042611">
        <id>O94307</id>
    </interactant>
    <interactant intactId="EBI-2042633">
        <id>P10506</id>
        <label>byr1</label>
    </interactant>
    <organismsDiffer>false</organismsDiffer>
    <experiments>2</experiments>
</comment>
<comment type="subcellular location">
    <subcellularLocation>
        <location evidence="2">Cytoplasm</location>
    </subcellularLocation>
    <text>Localizes to the cell tips and septum forming regions.</text>
</comment>
<comment type="similarity">
    <text evidence="3">Belongs to the prefoldin subunit alpha family.</text>
</comment>
<sequence length="154" mass="16774">MAEGNKAVDLTSLSLEQLSEVIKQLDSELEYLSTSYGQLGRAQLKFRECLANVNDAVRAENDGKEVLVPLTSSLYVPGKLNLGNSKLLVDIGTGYYVEKSAGEATEYYKRKCEYLASSIENLNNAIDAKSVQIRAVQNIMQQKATATTAATKSS</sequence>
<name>PFD5_SCHPO</name>
<gene>
    <name type="primary">bob1</name>
    <name type="ORF">SPBC215.02</name>
</gene>